<gene>
    <name type="ordered locus">MJ1240</name>
</gene>
<dbReference type="EMBL" id="L77117">
    <property type="protein sequence ID" value="AAB99245.1"/>
    <property type="molecule type" value="Genomic_DNA"/>
</dbReference>
<dbReference type="PIR" id="G64454">
    <property type="entry name" value="G64454"/>
</dbReference>
<dbReference type="RefSeq" id="WP_010870752.1">
    <property type="nucleotide sequence ID" value="NC_000909.1"/>
</dbReference>
<dbReference type="SMR" id="Q58637"/>
<dbReference type="STRING" id="243232.MJ_1240"/>
<dbReference type="PaxDb" id="243232-MJ_1240"/>
<dbReference type="EnsemblBacteria" id="AAB99245">
    <property type="protein sequence ID" value="AAB99245"/>
    <property type="gene ID" value="MJ_1240"/>
</dbReference>
<dbReference type="GeneID" id="1452136"/>
<dbReference type="KEGG" id="mja:MJ_1240"/>
<dbReference type="HOGENOM" id="CLU_2340194_0_0_2"/>
<dbReference type="InParanoid" id="Q58637"/>
<dbReference type="Proteomes" id="UP000000805">
    <property type="component" value="Chromosome"/>
</dbReference>
<keyword id="KW-1185">Reference proteome</keyword>
<feature type="chain" id="PRO_0000107233" description="Uncharacterized protein MJ1240">
    <location>
        <begin position="1"/>
        <end position="97"/>
    </location>
</feature>
<organism>
    <name type="scientific">Methanocaldococcus jannaschii (strain ATCC 43067 / DSM 2661 / JAL-1 / JCM 10045 / NBRC 100440)</name>
    <name type="common">Methanococcus jannaschii</name>
    <dbReference type="NCBI Taxonomy" id="243232"/>
    <lineage>
        <taxon>Archaea</taxon>
        <taxon>Methanobacteriati</taxon>
        <taxon>Methanobacteriota</taxon>
        <taxon>Methanomada group</taxon>
        <taxon>Methanococci</taxon>
        <taxon>Methanococcales</taxon>
        <taxon>Methanocaldococcaceae</taxon>
        <taxon>Methanocaldococcus</taxon>
    </lineage>
</organism>
<name>Y1240_METJA</name>
<reference key="1">
    <citation type="journal article" date="1996" name="Science">
        <title>Complete genome sequence of the methanogenic archaeon, Methanococcus jannaschii.</title>
        <authorList>
            <person name="Bult C.J."/>
            <person name="White O."/>
            <person name="Olsen G.J."/>
            <person name="Zhou L."/>
            <person name="Fleischmann R.D."/>
            <person name="Sutton G.G."/>
            <person name="Blake J.A."/>
            <person name="FitzGerald L.M."/>
            <person name="Clayton R.A."/>
            <person name="Gocayne J.D."/>
            <person name="Kerlavage A.R."/>
            <person name="Dougherty B.A."/>
            <person name="Tomb J.-F."/>
            <person name="Adams M.D."/>
            <person name="Reich C.I."/>
            <person name="Overbeek R."/>
            <person name="Kirkness E.F."/>
            <person name="Weinstock K.G."/>
            <person name="Merrick J.M."/>
            <person name="Glodek A."/>
            <person name="Scott J.L."/>
            <person name="Geoghagen N.S.M."/>
            <person name="Weidman J.F."/>
            <person name="Fuhrmann J.L."/>
            <person name="Nguyen D."/>
            <person name="Utterback T.R."/>
            <person name="Kelley J.M."/>
            <person name="Peterson J.D."/>
            <person name="Sadow P.W."/>
            <person name="Hanna M.C."/>
            <person name="Cotton M.D."/>
            <person name="Roberts K.M."/>
            <person name="Hurst M.A."/>
            <person name="Kaine B.P."/>
            <person name="Borodovsky M."/>
            <person name="Klenk H.-P."/>
            <person name="Fraser C.M."/>
            <person name="Smith H.O."/>
            <person name="Woese C.R."/>
            <person name="Venter J.C."/>
        </authorList>
    </citation>
    <scope>NUCLEOTIDE SEQUENCE [LARGE SCALE GENOMIC DNA]</scope>
    <source>
        <strain>ATCC 43067 / DSM 2661 / JAL-1 / JCM 10045 / NBRC 100440</strain>
    </source>
</reference>
<accession>Q58637</accession>
<sequence>MEIKKSYKDYKKLVWNVSTEFTQALARIMFFYIVNDLETAKNLAKITSPYLPKVPSKLLKELSEAIEEEIKAKSDIEKEKAKEKVKKAFVKLFYYTV</sequence>
<proteinExistence type="predicted"/>
<protein>
    <recommendedName>
        <fullName>Uncharacterized protein MJ1240</fullName>
    </recommendedName>
</protein>